<sequence length="359" mass="40777">MIAAQAKLVYQLNKYYSERCQARKGAIAKTIREVCKVVSDVLKEVEVQEPRFISSLTEIDARFEGLEVVAPTEFEVVLYLNQMGVFNFVDDGSLPGCAVLKLSDGRKRSMSLWVEFITASGYLSARKIRSRFQTLVAQAVDKCSYRDVVKMIADTSEVKLRIRERYIVQITPAFKCTGIWPRSAAQWPLPHIPWPGPNRVAEVKAEGFNLLSKECYSLTGKQSSAESDAWVVHFAEAENRLLLGGCRGKCLSVLKTLRDRHLELPGQPLNNYHMKTLLLYECEKHPRETDWDEACLGDRLNGILLQLISCLQCRRCPHYFLPNLDLFQGKPHSALESAAKQTWRLAREILTNPKSLDKL</sequence>
<keyword id="KW-0963">Cytoplasm</keyword>
<keyword id="KW-0217">Developmental protein</keyword>
<keyword id="KW-0539">Nucleus</keyword>
<keyword id="KW-1185">Reference proteome</keyword>
<dbReference type="EMBL" id="BC077947">
    <property type="protein sequence ID" value="AAH77947.1"/>
    <property type="molecule type" value="mRNA"/>
</dbReference>
<dbReference type="RefSeq" id="NP_001090239.1">
    <property type="nucleotide sequence ID" value="NM_001096770.1"/>
</dbReference>
<dbReference type="SMR" id="Q6DCQ5"/>
<dbReference type="DNASU" id="779143"/>
<dbReference type="GeneID" id="779143"/>
<dbReference type="KEGG" id="xla:779143"/>
<dbReference type="AGR" id="Xenbase:XB-GENE-6256487"/>
<dbReference type="CTD" id="779143"/>
<dbReference type="Xenbase" id="XB-GENE-6256487">
    <property type="gene designation" value="mab21l2.S"/>
</dbReference>
<dbReference type="OrthoDB" id="5961151at2759"/>
<dbReference type="Proteomes" id="UP000186698">
    <property type="component" value="Chromosome 1S"/>
</dbReference>
<dbReference type="Bgee" id="779143">
    <property type="expression patterns" value="Expressed in brain and 9 other cell types or tissues"/>
</dbReference>
<dbReference type="GO" id="GO:0005737">
    <property type="term" value="C:cytoplasm"/>
    <property type="evidence" value="ECO:0000250"/>
    <property type="project" value="UniProtKB"/>
</dbReference>
<dbReference type="GO" id="GO:0005634">
    <property type="term" value="C:nucleus"/>
    <property type="evidence" value="ECO:0000250"/>
    <property type="project" value="UniProtKB"/>
</dbReference>
<dbReference type="GO" id="GO:0001654">
    <property type="term" value="P:eye development"/>
    <property type="evidence" value="ECO:0000250"/>
    <property type="project" value="UniProtKB"/>
</dbReference>
<dbReference type="FunFam" id="1.10.1410.40:FF:000002">
    <property type="entry name" value="protein mab-21-like 1"/>
    <property type="match status" value="1"/>
</dbReference>
<dbReference type="FunFam" id="3.30.460.90:FF:000001">
    <property type="entry name" value="protein mab-21-like 2"/>
    <property type="match status" value="1"/>
</dbReference>
<dbReference type="Gene3D" id="1.10.1410.40">
    <property type="match status" value="1"/>
</dbReference>
<dbReference type="Gene3D" id="3.30.460.90">
    <property type="match status" value="1"/>
</dbReference>
<dbReference type="InterPro" id="IPR046903">
    <property type="entry name" value="Mab-21-like_nuc_Trfase"/>
</dbReference>
<dbReference type="InterPro" id="IPR046906">
    <property type="entry name" value="Mab-21_HhH/H2TH-like"/>
</dbReference>
<dbReference type="InterPro" id="IPR024810">
    <property type="entry name" value="MAB21L/cGLR"/>
</dbReference>
<dbReference type="PANTHER" id="PTHR10656">
    <property type="entry name" value="CELL FATE DETERMINING PROTEIN MAB21-RELATED"/>
    <property type="match status" value="1"/>
</dbReference>
<dbReference type="PANTHER" id="PTHR10656:SF37">
    <property type="entry name" value="PROTEIN MAB-21-LIKE 2"/>
    <property type="match status" value="1"/>
</dbReference>
<dbReference type="Pfam" id="PF03281">
    <property type="entry name" value="Mab-21"/>
    <property type="match status" value="1"/>
</dbReference>
<dbReference type="Pfam" id="PF20266">
    <property type="entry name" value="Mab-21_C"/>
    <property type="match status" value="1"/>
</dbReference>
<dbReference type="SMART" id="SM01265">
    <property type="entry name" value="Mab-21"/>
    <property type="match status" value="1"/>
</dbReference>
<comment type="function">
    <text evidence="1">Required for several aspects of embryonic development including normal development of the eye.</text>
</comment>
<comment type="subcellular location">
    <subcellularLocation>
        <location evidence="2">Nucleus</location>
    </subcellularLocation>
    <subcellularLocation>
        <location evidence="2">Cytoplasm</location>
    </subcellularLocation>
    <text evidence="2">Predominantly localizes to the nucleus, with some cytoplasmic localization.</text>
</comment>
<comment type="similarity">
    <text evidence="3">Belongs to the mab-21 family.</text>
</comment>
<feature type="chain" id="PRO_0000312791" description="Protein mab-21-like 2-B">
    <location>
        <begin position="1"/>
        <end position="359"/>
    </location>
</feature>
<name>M212B_XENLA</name>
<gene>
    <name type="primary">mab21l2-b</name>
</gene>
<organism>
    <name type="scientific">Xenopus laevis</name>
    <name type="common">African clawed frog</name>
    <dbReference type="NCBI Taxonomy" id="8355"/>
    <lineage>
        <taxon>Eukaryota</taxon>
        <taxon>Metazoa</taxon>
        <taxon>Chordata</taxon>
        <taxon>Craniata</taxon>
        <taxon>Vertebrata</taxon>
        <taxon>Euteleostomi</taxon>
        <taxon>Amphibia</taxon>
        <taxon>Batrachia</taxon>
        <taxon>Anura</taxon>
        <taxon>Pipoidea</taxon>
        <taxon>Pipidae</taxon>
        <taxon>Xenopodinae</taxon>
        <taxon>Xenopus</taxon>
        <taxon>Xenopus</taxon>
    </lineage>
</organism>
<accession>Q6DCQ5</accession>
<proteinExistence type="evidence at transcript level"/>
<protein>
    <recommendedName>
        <fullName>Protein mab-21-like 2-B</fullName>
    </recommendedName>
</protein>
<evidence type="ECO:0000250" key="1">
    <source>
        <dbReference type="UniProtKB" id="Q8BPP1"/>
    </source>
</evidence>
<evidence type="ECO:0000250" key="2">
    <source>
        <dbReference type="UniProtKB" id="Q9Y586"/>
    </source>
</evidence>
<evidence type="ECO:0000305" key="3"/>
<reference key="1">
    <citation type="submission" date="2004-07" db="EMBL/GenBank/DDBJ databases">
        <authorList>
            <consortium name="NIH - Xenopus Gene Collection (XGC) project"/>
        </authorList>
    </citation>
    <scope>NUCLEOTIDE SEQUENCE [LARGE SCALE MRNA]</scope>
    <source>
        <tissue>Embryo</tissue>
    </source>
</reference>